<protein>
    <recommendedName>
        <fullName evidence="1">Pantothenate synthetase</fullName>
        <shortName evidence="1">PS</shortName>
        <ecNumber evidence="1">6.3.2.1</ecNumber>
    </recommendedName>
    <alternativeName>
        <fullName evidence="1">Pantoate--beta-alanine ligase</fullName>
    </alternativeName>
    <alternativeName>
        <fullName evidence="1">Pantoate-activating enzyme</fullName>
    </alternativeName>
</protein>
<reference key="1">
    <citation type="journal article" date="2007" name="J. Bacteriol.">
        <title>Whole-genome analysis of the methyl tert-butyl ether-degrading beta-proteobacterium Methylibium petroleiphilum PM1.</title>
        <authorList>
            <person name="Kane S.R."/>
            <person name="Chakicherla A.Y."/>
            <person name="Chain P.S.G."/>
            <person name="Schmidt R."/>
            <person name="Shin M.W."/>
            <person name="Legler T.C."/>
            <person name="Scow K.M."/>
            <person name="Larimer F.W."/>
            <person name="Lucas S.M."/>
            <person name="Richardson P.M."/>
            <person name="Hristova K.R."/>
        </authorList>
    </citation>
    <scope>NUCLEOTIDE SEQUENCE [LARGE SCALE GENOMIC DNA]</scope>
    <source>
        <strain>ATCC BAA-1232 / LMG 22953 / PM1</strain>
    </source>
</reference>
<evidence type="ECO:0000255" key="1">
    <source>
        <dbReference type="HAMAP-Rule" id="MF_00158"/>
    </source>
</evidence>
<feature type="chain" id="PRO_0000305482" description="Pantothenate synthetase">
    <location>
        <begin position="1"/>
        <end position="281"/>
    </location>
</feature>
<feature type="active site" description="Proton donor" evidence="1">
    <location>
        <position position="33"/>
    </location>
</feature>
<feature type="binding site" evidence="1">
    <location>
        <begin position="26"/>
        <end position="33"/>
    </location>
    <ligand>
        <name>ATP</name>
        <dbReference type="ChEBI" id="CHEBI:30616"/>
    </ligand>
</feature>
<feature type="binding site" evidence="1">
    <location>
        <position position="57"/>
    </location>
    <ligand>
        <name>(R)-pantoate</name>
        <dbReference type="ChEBI" id="CHEBI:15980"/>
    </ligand>
</feature>
<feature type="binding site" evidence="1">
    <location>
        <position position="57"/>
    </location>
    <ligand>
        <name>beta-alanine</name>
        <dbReference type="ChEBI" id="CHEBI:57966"/>
    </ligand>
</feature>
<feature type="binding site" evidence="1">
    <location>
        <begin position="144"/>
        <end position="147"/>
    </location>
    <ligand>
        <name>ATP</name>
        <dbReference type="ChEBI" id="CHEBI:30616"/>
    </ligand>
</feature>
<feature type="binding site" evidence="1">
    <location>
        <position position="150"/>
    </location>
    <ligand>
        <name>(R)-pantoate</name>
        <dbReference type="ChEBI" id="CHEBI:15980"/>
    </ligand>
</feature>
<feature type="binding site" evidence="1">
    <location>
        <position position="173"/>
    </location>
    <ligand>
        <name>ATP</name>
        <dbReference type="ChEBI" id="CHEBI:30616"/>
    </ligand>
</feature>
<feature type="binding site" evidence="1">
    <location>
        <begin position="181"/>
        <end position="184"/>
    </location>
    <ligand>
        <name>ATP</name>
        <dbReference type="ChEBI" id="CHEBI:30616"/>
    </ligand>
</feature>
<keyword id="KW-0067">ATP-binding</keyword>
<keyword id="KW-0963">Cytoplasm</keyword>
<keyword id="KW-0436">Ligase</keyword>
<keyword id="KW-0547">Nucleotide-binding</keyword>
<keyword id="KW-0566">Pantothenate biosynthesis</keyword>
<keyword id="KW-1185">Reference proteome</keyword>
<organism>
    <name type="scientific">Methylibium petroleiphilum (strain ATCC BAA-1232 / LMG 22953 / PM1)</name>
    <dbReference type="NCBI Taxonomy" id="420662"/>
    <lineage>
        <taxon>Bacteria</taxon>
        <taxon>Pseudomonadati</taxon>
        <taxon>Pseudomonadota</taxon>
        <taxon>Betaproteobacteria</taxon>
        <taxon>Burkholderiales</taxon>
        <taxon>Sphaerotilaceae</taxon>
        <taxon>Methylibium</taxon>
    </lineage>
</organism>
<gene>
    <name evidence="1" type="primary">panC</name>
    <name type="ordered locus">Mpe_A1155</name>
</gene>
<name>PANC_METPP</name>
<sequence>MRVVHTINELRQALAATRPAALVPTMGSLHEGHLALVKQARDHGGPVVASIFVNRLQFAPHEDFDRYPRTLERDCDLLKGVGCNLVFAPTESELYPEPQTYKVQPPGELADVLEGAFRPGFFTGVCTVVMKLFQCVQPRVAVFGKKDYQQLMVLRGMVRQFALPIEIVAVDTARADDGLALSSRNAYLSEPERAEAPQLAATLHTVQAAVLAAVKSGARIDAAALEAQAMGTLRSRGWAPDYVALRRSSDLQAPADPTAEPLVVLAAARLGKTRLIDNLEI</sequence>
<dbReference type="EC" id="6.3.2.1" evidence="1"/>
<dbReference type="EMBL" id="CP000555">
    <property type="protein sequence ID" value="ABM94116.1"/>
    <property type="molecule type" value="Genomic_DNA"/>
</dbReference>
<dbReference type="RefSeq" id="WP_011828753.1">
    <property type="nucleotide sequence ID" value="NC_008825.1"/>
</dbReference>
<dbReference type="SMR" id="A2SEX7"/>
<dbReference type="STRING" id="420662.Mpe_A1155"/>
<dbReference type="KEGG" id="mpt:Mpe_A1155"/>
<dbReference type="eggNOG" id="COG0414">
    <property type="taxonomic scope" value="Bacteria"/>
</dbReference>
<dbReference type="HOGENOM" id="CLU_047148_0_0_4"/>
<dbReference type="UniPathway" id="UPA00028">
    <property type="reaction ID" value="UER00005"/>
</dbReference>
<dbReference type="Proteomes" id="UP000000366">
    <property type="component" value="Chromosome"/>
</dbReference>
<dbReference type="GO" id="GO:0005829">
    <property type="term" value="C:cytosol"/>
    <property type="evidence" value="ECO:0007669"/>
    <property type="project" value="TreeGrafter"/>
</dbReference>
<dbReference type="GO" id="GO:0005524">
    <property type="term" value="F:ATP binding"/>
    <property type="evidence" value="ECO:0007669"/>
    <property type="project" value="UniProtKB-KW"/>
</dbReference>
<dbReference type="GO" id="GO:0004592">
    <property type="term" value="F:pantoate-beta-alanine ligase activity"/>
    <property type="evidence" value="ECO:0007669"/>
    <property type="project" value="UniProtKB-UniRule"/>
</dbReference>
<dbReference type="GO" id="GO:0015940">
    <property type="term" value="P:pantothenate biosynthetic process"/>
    <property type="evidence" value="ECO:0007669"/>
    <property type="project" value="UniProtKB-UniRule"/>
</dbReference>
<dbReference type="CDD" id="cd00560">
    <property type="entry name" value="PanC"/>
    <property type="match status" value="1"/>
</dbReference>
<dbReference type="Gene3D" id="3.40.50.620">
    <property type="entry name" value="HUPs"/>
    <property type="match status" value="1"/>
</dbReference>
<dbReference type="Gene3D" id="3.30.1300.10">
    <property type="entry name" value="Pantoate-beta-alanine ligase, C-terminal domain"/>
    <property type="match status" value="1"/>
</dbReference>
<dbReference type="HAMAP" id="MF_00158">
    <property type="entry name" value="PanC"/>
    <property type="match status" value="1"/>
</dbReference>
<dbReference type="InterPro" id="IPR003721">
    <property type="entry name" value="Pantoate_ligase"/>
</dbReference>
<dbReference type="InterPro" id="IPR042176">
    <property type="entry name" value="Pantoate_ligase_C"/>
</dbReference>
<dbReference type="InterPro" id="IPR014729">
    <property type="entry name" value="Rossmann-like_a/b/a_fold"/>
</dbReference>
<dbReference type="NCBIfam" id="TIGR00018">
    <property type="entry name" value="panC"/>
    <property type="match status" value="1"/>
</dbReference>
<dbReference type="PANTHER" id="PTHR21299">
    <property type="entry name" value="CYTIDYLATE KINASE/PANTOATE-BETA-ALANINE LIGASE"/>
    <property type="match status" value="1"/>
</dbReference>
<dbReference type="PANTHER" id="PTHR21299:SF1">
    <property type="entry name" value="PANTOATE--BETA-ALANINE LIGASE"/>
    <property type="match status" value="1"/>
</dbReference>
<dbReference type="Pfam" id="PF02569">
    <property type="entry name" value="Pantoate_ligase"/>
    <property type="match status" value="1"/>
</dbReference>
<dbReference type="SUPFAM" id="SSF52374">
    <property type="entry name" value="Nucleotidylyl transferase"/>
    <property type="match status" value="1"/>
</dbReference>
<comment type="function">
    <text evidence="1">Catalyzes the condensation of pantoate with beta-alanine in an ATP-dependent reaction via a pantoyl-adenylate intermediate.</text>
</comment>
<comment type="catalytic activity">
    <reaction evidence="1">
        <text>(R)-pantoate + beta-alanine + ATP = (R)-pantothenate + AMP + diphosphate + H(+)</text>
        <dbReference type="Rhea" id="RHEA:10912"/>
        <dbReference type="ChEBI" id="CHEBI:15378"/>
        <dbReference type="ChEBI" id="CHEBI:15980"/>
        <dbReference type="ChEBI" id="CHEBI:29032"/>
        <dbReference type="ChEBI" id="CHEBI:30616"/>
        <dbReference type="ChEBI" id="CHEBI:33019"/>
        <dbReference type="ChEBI" id="CHEBI:57966"/>
        <dbReference type="ChEBI" id="CHEBI:456215"/>
        <dbReference type="EC" id="6.3.2.1"/>
    </reaction>
</comment>
<comment type="pathway">
    <text evidence="1">Cofactor biosynthesis; (R)-pantothenate biosynthesis; (R)-pantothenate from (R)-pantoate and beta-alanine: step 1/1.</text>
</comment>
<comment type="subunit">
    <text evidence="1">Homodimer.</text>
</comment>
<comment type="subcellular location">
    <subcellularLocation>
        <location evidence="1">Cytoplasm</location>
    </subcellularLocation>
</comment>
<comment type="miscellaneous">
    <text evidence="1">The reaction proceeds by a bi uni uni bi ping pong mechanism.</text>
</comment>
<comment type="similarity">
    <text evidence="1">Belongs to the pantothenate synthetase family.</text>
</comment>
<proteinExistence type="inferred from homology"/>
<accession>A2SEX7</accession>